<organism>
    <name type="scientific">Brucella suis (strain ATCC 23445 / NCTC 10510)</name>
    <dbReference type="NCBI Taxonomy" id="470137"/>
    <lineage>
        <taxon>Bacteria</taxon>
        <taxon>Pseudomonadati</taxon>
        <taxon>Pseudomonadota</taxon>
        <taxon>Alphaproteobacteria</taxon>
        <taxon>Hyphomicrobiales</taxon>
        <taxon>Brucellaceae</taxon>
        <taxon>Brucella/Ochrobactrum group</taxon>
        <taxon>Brucella</taxon>
    </lineage>
</organism>
<keyword id="KW-0028">Amino-acid biosynthesis</keyword>
<keyword id="KW-0057">Aromatic amino acid biosynthesis</keyword>
<keyword id="KW-0274">FAD</keyword>
<keyword id="KW-0285">Flavoprotein</keyword>
<keyword id="KW-0288">FMN</keyword>
<keyword id="KW-0456">Lyase</keyword>
<keyword id="KW-0521">NADP</keyword>
<comment type="function">
    <text evidence="1">Catalyzes the anti-1,4-elimination of the C-3 phosphate and the C-6 proR hydrogen from 5-enolpyruvylshikimate-3-phosphate (EPSP) to yield chorismate, which is the branch point compound that serves as the starting substrate for the three terminal pathways of aromatic amino acid biosynthesis. This reaction introduces a second double bond into the aromatic ring system.</text>
</comment>
<comment type="catalytic activity">
    <reaction evidence="1">
        <text>5-O-(1-carboxyvinyl)-3-phosphoshikimate = chorismate + phosphate</text>
        <dbReference type="Rhea" id="RHEA:21020"/>
        <dbReference type="ChEBI" id="CHEBI:29748"/>
        <dbReference type="ChEBI" id="CHEBI:43474"/>
        <dbReference type="ChEBI" id="CHEBI:57701"/>
        <dbReference type="EC" id="4.2.3.5"/>
    </reaction>
</comment>
<comment type="cofactor">
    <cofactor evidence="1">
        <name>FMNH2</name>
        <dbReference type="ChEBI" id="CHEBI:57618"/>
    </cofactor>
    <text evidence="1">Reduced FMN (FMNH(2)).</text>
</comment>
<comment type="pathway">
    <text evidence="1">Metabolic intermediate biosynthesis; chorismate biosynthesis; chorismate from D-erythrose 4-phosphate and phosphoenolpyruvate: step 7/7.</text>
</comment>
<comment type="subunit">
    <text evidence="1">Homotetramer.</text>
</comment>
<comment type="similarity">
    <text evidence="1">Belongs to the chorismate synthase family.</text>
</comment>
<gene>
    <name evidence="1" type="primary">aroC</name>
    <name type="ordered locus">BSUIS_A0454</name>
</gene>
<reference key="1">
    <citation type="submission" date="2007-12" db="EMBL/GenBank/DDBJ databases">
        <title>Brucella suis ATCC 23445 whole genome shotgun sequencing project.</title>
        <authorList>
            <person name="Setubal J.C."/>
            <person name="Bowns C."/>
            <person name="Boyle S."/>
            <person name="Crasta O.R."/>
            <person name="Czar M.J."/>
            <person name="Dharmanolla C."/>
            <person name="Gillespie J.J."/>
            <person name="Kenyon R.W."/>
            <person name="Lu J."/>
            <person name="Mane S."/>
            <person name="Mohapatra S."/>
            <person name="Nagrani S."/>
            <person name="Purkayastha A."/>
            <person name="Rajasimha H.K."/>
            <person name="Shallom J.M."/>
            <person name="Shallom S."/>
            <person name="Shukla M."/>
            <person name="Snyder E.E."/>
            <person name="Sobral B.W."/>
            <person name="Wattam A.R."/>
            <person name="Will R."/>
            <person name="Williams K."/>
            <person name="Yoo H."/>
            <person name="Bruce D."/>
            <person name="Detter C."/>
            <person name="Munk C."/>
            <person name="Brettin T.S."/>
        </authorList>
    </citation>
    <scope>NUCLEOTIDE SEQUENCE [LARGE SCALE GENOMIC DNA]</scope>
    <source>
        <strain>ATCC 23445 / NCTC 10510</strain>
    </source>
</reference>
<proteinExistence type="inferred from homology"/>
<dbReference type="EC" id="4.2.3.5" evidence="1"/>
<dbReference type="EMBL" id="CP000911">
    <property type="protein sequence ID" value="ABY37542.1"/>
    <property type="molecule type" value="Genomic_DNA"/>
</dbReference>
<dbReference type="RefSeq" id="WP_002963585.1">
    <property type="nucleotide sequence ID" value="NC_010169.1"/>
</dbReference>
<dbReference type="SMR" id="B0CKB2"/>
<dbReference type="GeneID" id="97534201"/>
<dbReference type="KEGG" id="bmt:BSUIS_A0454"/>
<dbReference type="HOGENOM" id="CLU_034547_0_0_5"/>
<dbReference type="UniPathway" id="UPA00053">
    <property type="reaction ID" value="UER00090"/>
</dbReference>
<dbReference type="PRO" id="PR:B0CKB2"/>
<dbReference type="Proteomes" id="UP000008545">
    <property type="component" value="Chromosome I"/>
</dbReference>
<dbReference type="GO" id="GO:0005829">
    <property type="term" value="C:cytosol"/>
    <property type="evidence" value="ECO:0007669"/>
    <property type="project" value="TreeGrafter"/>
</dbReference>
<dbReference type="GO" id="GO:0004107">
    <property type="term" value="F:chorismate synthase activity"/>
    <property type="evidence" value="ECO:0007669"/>
    <property type="project" value="UniProtKB-UniRule"/>
</dbReference>
<dbReference type="GO" id="GO:0010181">
    <property type="term" value="F:FMN binding"/>
    <property type="evidence" value="ECO:0007669"/>
    <property type="project" value="TreeGrafter"/>
</dbReference>
<dbReference type="GO" id="GO:0008652">
    <property type="term" value="P:amino acid biosynthetic process"/>
    <property type="evidence" value="ECO:0007669"/>
    <property type="project" value="UniProtKB-KW"/>
</dbReference>
<dbReference type="GO" id="GO:0009073">
    <property type="term" value="P:aromatic amino acid family biosynthetic process"/>
    <property type="evidence" value="ECO:0007669"/>
    <property type="project" value="UniProtKB-KW"/>
</dbReference>
<dbReference type="GO" id="GO:0009423">
    <property type="term" value="P:chorismate biosynthetic process"/>
    <property type="evidence" value="ECO:0007669"/>
    <property type="project" value="UniProtKB-UniRule"/>
</dbReference>
<dbReference type="CDD" id="cd07304">
    <property type="entry name" value="Chorismate_synthase"/>
    <property type="match status" value="1"/>
</dbReference>
<dbReference type="Gene3D" id="3.60.150.10">
    <property type="entry name" value="Chorismate synthase AroC"/>
    <property type="match status" value="1"/>
</dbReference>
<dbReference type="HAMAP" id="MF_00300">
    <property type="entry name" value="Chorismate_synth"/>
    <property type="match status" value="1"/>
</dbReference>
<dbReference type="InterPro" id="IPR000453">
    <property type="entry name" value="Chorismate_synth"/>
</dbReference>
<dbReference type="InterPro" id="IPR035904">
    <property type="entry name" value="Chorismate_synth_AroC_sf"/>
</dbReference>
<dbReference type="InterPro" id="IPR020541">
    <property type="entry name" value="Chorismate_synthase_CS"/>
</dbReference>
<dbReference type="NCBIfam" id="TIGR00033">
    <property type="entry name" value="aroC"/>
    <property type="match status" value="1"/>
</dbReference>
<dbReference type="NCBIfam" id="NF003793">
    <property type="entry name" value="PRK05382.1"/>
    <property type="match status" value="1"/>
</dbReference>
<dbReference type="PANTHER" id="PTHR21085">
    <property type="entry name" value="CHORISMATE SYNTHASE"/>
    <property type="match status" value="1"/>
</dbReference>
<dbReference type="PANTHER" id="PTHR21085:SF0">
    <property type="entry name" value="CHORISMATE SYNTHASE"/>
    <property type="match status" value="1"/>
</dbReference>
<dbReference type="Pfam" id="PF01264">
    <property type="entry name" value="Chorismate_synt"/>
    <property type="match status" value="1"/>
</dbReference>
<dbReference type="PIRSF" id="PIRSF001456">
    <property type="entry name" value="Chorismate_synth"/>
    <property type="match status" value="1"/>
</dbReference>
<dbReference type="SUPFAM" id="SSF103263">
    <property type="entry name" value="Chorismate synthase, AroC"/>
    <property type="match status" value="1"/>
</dbReference>
<dbReference type="PROSITE" id="PS00787">
    <property type="entry name" value="CHORISMATE_SYNTHASE_1"/>
    <property type="match status" value="1"/>
</dbReference>
<dbReference type="PROSITE" id="PS00788">
    <property type="entry name" value="CHORISMATE_SYNTHASE_2"/>
    <property type="match status" value="1"/>
</dbReference>
<dbReference type="PROSITE" id="PS00789">
    <property type="entry name" value="CHORISMATE_SYNTHASE_3"/>
    <property type="match status" value="1"/>
</dbReference>
<sequence>MSHNSFGHLFRVTTWGESHGLALGCVVDGCPPGITFTEAEIQSFLDKRKPGQSKYTTQRREPDQVRVLSGVLLGEDGVTMTTTGTPISMMIENTDQRSKDYGEIARQYRPGHADYAYDVKYGIRDYRGGGRSSARETAARVAAGAIARKVVPGLEVRGALVSIGAHDIDRSRWNWAEVDNNPFFTPDAGSVEVFADYLDGIRKNGSSVGAIIEIVAEGVPAGIGAPIYGKLDQDIASYLMSINAVKGVEIGNGFEAARLTGEENADEMRMGNDGKPIFLSNHAGGVLGGIATGAPVVARFAVKPTSSILTPRRSIDKDGNEVDVMTRGRHDPCVGIRAVPIGEAMVACAIADHYLRHRGQTGRV</sequence>
<name>AROC_BRUSI</name>
<protein>
    <recommendedName>
        <fullName evidence="1">Chorismate synthase</fullName>
        <shortName evidence="1">CS</shortName>
        <ecNumber evidence="1">4.2.3.5</ecNumber>
    </recommendedName>
    <alternativeName>
        <fullName evidence="1">5-enolpyruvylshikimate-3-phosphate phospholyase</fullName>
    </alternativeName>
</protein>
<accession>B0CKB2</accession>
<evidence type="ECO:0000255" key="1">
    <source>
        <dbReference type="HAMAP-Rule" id="MF_00300"/>
    </source>
</evidence>
<feature type="chain" id="PRO_1000078987" description="Chorismate synthase">
    <location>
        <begin position="1"/>
        <end position="364"/>
    </location>
</feature>
<feature type="binding site" evidence="1">
    <location>
        <position position="48"/>
    </location>
    <ligand>
        <name>NADP(+)</name>
        <dbReference type="ChEBI" id="CHEBI:58349"/>
    </ligand>
</feature>
<feature type="binding site" evidence="1">
    <location>
        <begin position="131"/>
        <end position="133"/>
    </location>
    <ligand>
        <name>FMN</name>
        <dbReference type="ChEBI" id="CHEBI:58210"/>
    </ligand>
</feature>
<feature type="binding site" evidence="1">
    <location>
        <begin position="243"/>
        <end position="244"/>
    </location>
    <ligand>
        <name>FMN</name>
        <dbReference type="ChEBI" id="CHEBI:58210"/>
    </ligand>
</feature>
<feature type="binding site" evidence="1">
    <location>
        <position position="288"/>
    </location>
    <ligand>
        <name>FMN</name>
        <dbReference type="ChEBI" id="CHEBI:58210"/>
    </ligand>
</feature>
<feature type="binding site" evidence="1">
    <location>
        <begin position="303"/>
        <end position="307"/>
    </location>
    <ligand>
        <name>FMN</name>
        <dbReference type="ChEBI" id="CHEBI:58210"/>
    </ligand>
</feature>
<feature type="binding site" evidence="1">
    <location>
        <position position="329"/>
    </location>
    <ligand>
        <name>FMN</name>
        <dbReference type="ChEBI" id="CHEBI:58210"/>
    </ligand>
</feature>